<feature type="chain" id="PRO_0000286463" description="Putative glutamine transport system permease protein GlnP">
    <location>
        <begin position="1"/>
        <end position="218"/>
    </location>
</feature>
<feature type="transmembrane region" description="Helical" evidence="2">
    <location>
        <begin position="25"/>
        <end position="45"/>
    </location>
</feature>
<feature type="transmembrane region" description="Helical" evidence="2">
    <location>
        <begin position="57"/>
        <end position="79"/>
    </location>
</feature>
<feature type="transmembrane region" description="Helical" evidence="2">
    <location>
        <begin position="86"/>
        <end position="108"/>
    </location>
</feature>
<feature type="transmembrane region" description="Helical" evidence="2">
    <location>
        <begin position="187"/>
        <end position="207"/>
    </location>
</feature>
<feature type="domain" description="ABC transmembrane type-1" evidence="2">
    <location>
        <begin position="19"/>
        <end position="208"/>
    </location>
</feature>
<dbReference type="EMBL" id="AE006914">
    <property type="protein sequence ID" value="AAL02709.1"/>
    <property type="molecule type" value="Genomic_DNA"/>
</dbReference>
<dbReference type="PIR" id="C97721">
    <property type="entry name" value="C97721"/>
</dbReference>
<dbReference type="RefSeq" id="WP_004996648.1">
    <property type="nucleotide sequence ID" value="NC_003103.1"/>
</dbReference>
<dbReference type="SMR" id="Q92J96"/>
<dbReference type="KEGG" id="rco:RC0171"/>
<dbReference type="HOGENOM" id="CLU_019602_1_1_5"/>
<dbReference type="Proteomes" id="UP000000816">
    <property type="component" value="Chromosome"/>
</dbReference>
<dbReference type="GO" id="GO:0043190">
    <property type="term" value="C:ATP-binding cassette (ABC) transporter complex"/>
    <property type="evidence" value="ECO:0007669"/>
    <property type="project" value="InterPro"/>
</dbReference>
<dbReference type="GO" id="GO:0022857">
    <property type="term" value="F:transmembrane transporter activity"/>
    <property type="evidence" value="ECO:0007669"/>
    <property type="project" value="InterPro"/>
</dbReference>
<dbReference type="GO" id="GO:0006865">
    <property type="term" value="P:amino acid transport"/>
    <property type="evidence" value="ECO:0007669"/>
    <property type="project" value="UniProtKB-KW"/>
</dbReference>
<dbReference type="CDD" id="cd06261">
    <property type="entry name" value="TM_PBP2"/>
    <property type="match status" value="1"/>
</dbReference>
<dbReference type="Gene3D" id="1.10.3720.10">
    <property type="entry name" value="MetI-like"/>
    <property type="match status" value="1"/>
</dbReference>
<dbReference type="InterPro" id="IPR010065">
    <property type="entry name" value="AA_ABC_transptr_permease_3TM"/>
</dbReference>
<dbReference type="InterPro" id="IPR043429">
    <property type="entry name" value="ArtM/GltK/GlnP/TcyL/YhdX-like"/>
</dbReference>
<dbReference type="InterPro" id="IPR000515">
    <property type="entry name" value="MetI-like"/>
</dbReference>
<dbReference type="InterPro" id="IPR035906">
    <property type="entry name" value="MetI-like_sf"/>
</dbReference>
<dbReference type="NCBIfam" id="TIGR01726">
    <property type="entry name" value="HEQRo_perm_3TM"/>
    <property type="match status" value="1"/>
</dbReference>
<dbReference type="PANTHER" id="PTHR30614:SF20">
    <property type="entry name" value="GLUTAMINE TRANSPORT SYSTEM PERMEASE PROTEIN GLNP"/>
    <property type="match status" value="1"/>
</dbReference>
<dbReference type="PANTHER" id="PTHR30614">
    <property type="entry name" value="MEMBRANE COMPONENT OF AMINO ACID ABC TRANSPORTER"/>
    <property type="match status" value="1"/>
</dbReference>
<dbReference type="Pfam" id="PF00528">
    <property type="entry name" value="BPD_transp_1"/>
    <property type="match status" value="1"/>
</dbReference>
<dbReference type="SUPFAM" id="SSF161098">
    <property type="entry name" value="MetI-like"/>
    <property type="match status" value="1"/>
</dbReference>
<dbReference type="PROSITE" id="PS50928">
    <property type="entry name" value="ABC_TM1"/>
    <property type="match status" value="1"/>
</dbReference>
<keyword id="KW-0029">Amino-acid transport</keyword>
<keyword id="KW-0997">Cell inner membrane</keyword>
<keyword id="KW-1003">Cell membrane</keyword>
<keyword id="KW-0472">Membrane</keyword>
<keyword id="KW-0812">Transmembrane</keyword>
<keyword id="KW-1133">Transmembrane helix</keyword>
<keyword id="KW-0813">Transport</keyword>
<protein>
    <recommendedName>
        <fullName>Putative glutamine transport system permease protein GlnP</fullName>
    </recommendedName>
</protein>
<accession>Q92J96</accession>
<proteinExistence type="inferred from homology"/>
<organism>
    <name type="scientific">Rickettsia conorii (strain ATCC VR-613 / Malish 7)</name>
    <dbReference type="NCBI Taxonomy" id="272944"/>
    <lineage>
        <taxon>Bacteria</taxon>
        <taxon>Pseudomonadati</taxon>
        <taxon>Pseudomonadota</taxon>
        <taxon>Alphaproteobacteria</taxon>
        <taxon>Rickettsiales</taxon>
        <taxon>Rickettsiaceae</taxon>
        <taxon>Rickettsieae</taxon>
        <taxon>Rickettsia</taxon>
        <taxon>spotted fever group</taxon>
    </lineage>
</organism>
<sequence length="218" mass="24492">MFEYLIKFYPKIFFIVEGTLVTLKYSVIAVIFGLVIGMLLAICKVNKNRALRLFANFYTSIFRGTPLLIQLSIIYFASPYIIGIKFSVFMAGAIAFSLNSGAYVSEVIRAGINAVDKGQFEAAEALAIPKFLITKDIILPQAVKNIFPSLVNELVNLIKESAIISMLGEMDLMRRAQIVSIETYNYFFPMLIAACCYYILVMLISFIAKIIEKKMIVN</sequence>
<reference key="1">
    <citation type="journal article" date="2001" name="Science">
        <title>Mechanisms of evolution in Rickettsia conorii and R. prowazekii.</title>
        <authorList>
            <person name="Ogata H."/>
            <person name="Audic S."/>
            <person name="Renesto-Audiffren P."/>
            <person name="Fournier P.-E."/>
            <person name="Barbe V."/>
            <person name="Samson D."/>
            <person name="Roux V."/>
            <person name="Cossart P."/>
            <person name="Weissenbach J."/>
            <person name="Claverie J.-M."/>
            <person name="Raoult D."/>
        </authorList>
    </citation>
    <scope>NUCLEOTIDE SEQUENCE [LARGE SCALE GENOMIC DNA]</scope>
    <source>
        <strain>ATCC VR-613 / Malish 7</strain>
    </source>
</reference>
<comment type="function">
    <text evidence="1">Part of the binding-protein-dependent transport system for glutamine; probably responsible for the translocation of the substrate across the membrane.</text>
</comment>
<comment type="subcellular location">
    <subcellularLocation>
        <location>Cell inner membrane</location>
        <topology>Multi-pass membrane protein</topology>
    </subcellularLocation>
</comment>
<comment type="similarity">
    <text evidence="3">Belongs to the binding-protein-dependent transport system permease family. HisMQ subfamily.</text>
</comment>
<gene>
    <name type="primary">glnP</name>
    <name type="ordered locus">RC0171</name>
</gene>
<name>GLNP_RICCN</name>
<evidence type="ECO:0000250" key="1"/>
<evidence type="ECO:0000255" key="2">
    <source>
        <dbReference type="PROSITE-ProRule" id="PRU00441"/>
    </source>
</evidence>
<evidence type="ECO:0000305" key="3"/>